<proteinExistence type="inferred from homology"/>
<sequence length="133" mass="15110">MSQDFSREKRLLTPRHFKAVFDSPTGKVPGKNLLLLARNNDLDHPRLGLVIGKKSVKLSVERNRLKRLMRESFRLHQDSLVGWDIVIVARKGLGDVENPELIQHFGKLWKRLARNKPVPAVKTETVGVDSPDA</sequence>
<keyword id="KW-0255">Endonuclease</keyword>
<keyword id="KW-0378">Hydrolase</keyword>
<keyword id="KW-0540">Nuclease</keyword>
<keyword id="KW-0694">RNA-binding</keyword>
<keyword id="KW-0819">tRNA processing</keyword>
<organism>
    <name type="scientific">Pseudomonas fluorescens (strain Pf0-1)</name>
    <dbReference type="NCBI Taxonomy" id="205922"/>
    <lineage>
        <taxon>Bacteria</taxon>
        <taxon>Pseudomonadati</taxon>
        <taxon>Pseudomonadota</taxon>
        <taxon>Gammaproteobacteria</taxon>
        <taxon>Pseudomonadales</taxon>
        <taxon>Pseudomonadaceae</taxon>
        <taxon>Pseudomonas</taxon>
    </lineage>
</organism>
<name>RNPA_PSEPF</name>
<feature type="chain" id="PRO_1000021447" description="Ribonuclease P protein component">
    <location>
        <begin position="1"/>
        <end position="133"/>
    </location>
</feature>
<dbReference type="EC" id="3.1.26.5" evidence="1"/>
<dbReference type="EMBL" id="CP000094">
    <property type="protein sequence ID" value="ABA77478.1"/>
    <property type="molecule type" value="Genomic_DNA"/>
</dbReference>
<dbReference type="RefSeq" id="WP_011336726.1">
    <property type="nucleotide sequence ID" value="NC_007492.2"/>
</dbReference>
<dbReference type="SMR" id="Q3K426"/>
<dbReference type="GeneID" id="93492130"/>
<dbReference type="KEGG" id="pfo:Pfl01_5745"/>
<dbReference type="eggNOG" id="COG0594">
    <property type="taxonomic scope" value="Bacteria"/>
</dbReference>
<dbReference type="HOGENOM" id="CLU_117179_11_0_6"/>
<dbReference type="Proteomes" id="UP000002704">
    <property type="component" value="Chromosome"/>
</dbReference>
<dbReference type="GO" id="GO:0030677">
    <property type="term" value="C:ribonuclease P complex"/>
    <property type="evidence" value="ECO:0007669"/>
    <property type="project" value="TreeGrafter"/>
</dbReference>
<dbReference type="GO" id="GO:0042781">
    <property type="term" value="F:3'-tRNA processing endoribonuclease activity"/>
    <property type="evidence" value="ECO:0007669"/>
    <property type="project" value="TreeGrafter"/>
</dbReference>
<dbReference type="GO" id="GO:0004526">
    <property type="term" value="F:ribonuclease P activity"/>
    <property type="evidence" value="ECO:0007669"/>
    <property type="project" value="UniProtKB-UniRule"/>
</dbReference>
<dbReference type="GO" id="GO:0000049">
    <property type="term" value="F:tRNA binding"/>
    <property type="evidence" value="ECO:0007669"/>
    <property type="project" value="UniProtKB-UniRule"/>
</dbReference>
<dbReference type="GO" id="GO:0001682">
    <property type="term" value="P:tRNA 5'-leader removal"/>
    <property type="evidence" value="ECO:0007669"/>
    <property type="project" value="UniProtKB-UniRule"/>
</dbReference>
<dbReference type="Gene3D" id="3.30.230.10">
    <property type="match status" value="1"/>
</dbReference>
<dbReference type="HAMAP" id="MF_00227">
    <property type="entry name" value="RNase_P"/>
    <property type="match status" value="1"/>
</dbReference>
<dbReference type="InterPro" id="IPR020568">
    <property type="entry name" value="Ribosomal_Su5_D2-typ_SF"/>
</dbReference>
<dbReference type="InterPro" id="IPR014721">
    <property type="entry name" value="Ribsml_uS5_D2-typ_fold_subgr"/>
</dbReference>
<dbReference type="InterPro" id="IPR000100">
    <property type="entry name" value="RNase_P"/>
</dbReference>
<dbReference type="NCBIfam" id="TIGR00188">
    <property type="entry name" value="rnpA"/>
    <property type="match status" value="1"/>
</dbReference>
<dbReference type="PANTHER" id="PTHR33992">
    <property type="entry name" value="RIBONUCLEASE P PROTEIN COMPONENT"/>
    <property type="match status" value="1"/>
</dbReference>
<dbReference type="PANTHER" id="PTHR33992:SF1">
    <property type="entry name" value="RIBONUCLEASE P PROTEIN COMPONENT"/>
    <property type="match status" value="1"/>
</dbReference>
<dbReference type="Pfam" id="PF00825">
    <property type="entry name" value="Ribonuclease_P"/>
    <property type="match status" value="1"/>
</dbReference>
<dbReference type="SUPFAM" id="SSF54211">
    <property type="entry name" value="Ribosomal protein S5 domain 2-like"/>
    <property type="match status" value="1"/>
</dbReference>
<reference key="1">
    <citation type="journal article" date="2009" name="Genome Biol.">
        <title>Genomic and genetic analyses of diversity and plant interactions of Pseudomonas fluorescens.</title>
        <authorList>
            <person name="Silby M.W."/>
            <person name="Cerdeno-Tarraga A.M."/>
            <person name="Vernikos G.S."/>
            <person name="Giddens S.R."/>
            <person name="Jackson R.W."/>
            <person name="Preston G.M."/>
            <person name="Zhang X.-X."/>
            <person name="Moon C.D."/>
            <person name="Gehrig S.M."/>
            <person name="Godfrey S.A.C."/>
            <person name="Knight C.G."/>
            <person name="Malone J.G."/>
            <person name="Robinson Z."/>
            <person name="Spiers A.J."/>
            <person name="Harris S."/>
            <person name="Challis G.L."/>
            <person name="Yaxley A.M."/>
            <person name="Harris D."/>
            <person name="Seeger K."/>
            <person name="Murphy L."/>
            <person name="Rutter S."/>
            <person name="Squares R."/>
            <person name="Quail M.A."/>
            <person name="Saunders E."/>
            <person name="Mavromatis K."/>
            <person name="Brettin T.S."/>
            <person name="Bentley S.D."/>
            <person name="Hothersall J."/>
            <person name="Stephens E."/>
            <person name="Thomas C.M."/>
            <person name="Parkhill J."/>
            <person name="Levy S.B."/>
            <person name="Rainey P.B."/>
            <person name="Thomson N.R."/>
        </authorList>
    </citation>
    <scope>NUCLEOTIDE SEQUENCE [LARGE SCALE GENOMIC DNA]</scope>
    <source>
        <strain>Pf0-1</strain>
    </source>
</reference>
<protein>
    <recommendedName>
        <fullName evidence="1">Ribonuclease P protein component</fullName>
        <shortName evidence="1">RNase P protein</shortName>
        <shortName evidence="1">RNaseP protein</shortName>
        <ecNumber evidence="1">3.1.26.5</ecNumber>
    </recommendedName>
    <alternativeName>
        <fullName evidence="1">Protein C5</fullName>
    </alternativeName>
</protein>
<comment type="function">
    <text evidence="1">RNaseP catalyzes the removal of the 5'-leader sequence from pre-tRNA to produce the mature 5'-terminus. It can also cleave other RNA substrates such as 4.5S RNA. The protein component plays an auxiliary but essential role in vivo by binding to the 5'-leader sequence and broadening the substrate specificity of the ribozyme.</text>
</comment>
<comment type="catalytic activity">
    <reaction evidence="1">
        <text>Endonucleolytic cleavage of RNA, removing 5'-extranucleotides from tRNA precursor.</text>
        <dbReference type="EC" id="3.1.26.5"/>
    </reaction>
</comment>
<comment type="subunit">
    <text evidence="1">Consists of a catalytic RNA component (M1 or rnpB) and a protein subunit.</text>
</comment>
<comment type="similarity">
    <text evidence="1">Belongs to the RnpA family.</text>
</comment>
<evidence type="ECO:0000255" key="1">
    <source>
        <dbReference type="HAMAP-Rule" id="MF_00227"/>
    </source>
</evidence>
<gene>
    <name evidence="1" type="primary">rnpA</name>
    <name type="ordered locus">Pfl01_5745</name>
</gene>
<accession>Q3K426</accession>